<evidence type="ECO:0000255" key="1">
    <source>
        <dbReference type="HAMAP-Rule" id="MF_00044"/>
    </source>
</evidence>
<name>SYD_SALPA</name>
<keyword id="KW-0030">Aminoacyl-tRNA synthetase</keyword>
<keyword id="KW-0067">ATP-binding</keyword>
<keyword id="KW-0963">Cytoplasm</keyword>
<keyword id="KW-0436">Ligase</keyword>
<keyword id="KW-0547">Nucleotide-binding</keyword>
<keyword id="KW-0648">Protein biosynthesis</keyword>
<feature type="chain" id="PRO_0000110935" description="Aspartate--tRNA ligase">
    <location>
        <begin position="1"/>
        <end position="590"/>
    </location>
</feature>
<feature type="region of interest" description="Aspartate" evidence="1">
    <location>
        <begin position="195"/>
        <end position="198"/>
    </location>
</feature>
<feature type="binding site" evidence="1">
    <location>
        <position position="171"/>
    </location>
    <ligand>
        <name>L-aspartate</name>
        <dbReference type="ChEBI" id="CHEBI:29991"/>
    </ligand>
</feature>
<feature type="binding site" evidence="1">
    <location>
        <begin position="217"/>
        <end position="219"/>
    </location>
    <ligand>
        <name>ATP</name>
        <dbReference type="ChEBI" id="CHEBI:30616"/>
    </ligand>
</feature>
<feature type="binding site" evidence="1">
    <location>
        <position position="217"/>
    </location>
    <ligand>
        <name>L-aspartate</name>
        <dbReference type="ChEBI" id="CHEBI:29991"/>
    </ligand>
</feature>
<feature type="binding site" evidence="1">
    <location>
        <position position="226"/>
    </location>
    <ligand>
        <name>ATP</name>
        <dbReference type="ChEBI" id="CHEBI:30616"/>
    </ligand>
</feature>
<feature type="binding site" evidence="1">
    <location>
        <position position="448"/>
    </location>
    <ligand>
        <name>L-aspartate</name>
        <dbReference type="ChEBI" id="CHEBI:29991"/>
    </ligand>
</feature>
<feature type="binding site" evidence="1">
    <location>
        <position position="482"/>
    </location>
    <ligand>
        <name>ATP</name>
        <dbReference type="ChEBI" id="CHEBI:30616"/>
    </ligand>
</feature>
<feature type="binding site" evidence="1">
    <location>
        <position position="489"/>
    </location>
    <ligand>
        <name>L-aspartate</name>
        <dbReference type="ChEBI" id="CHEBI:29991"/>
    </ligand>
</feature>
<feature type="binding site" evidence="1">
    <location>
        <begin position="534"/>
        <end position="537"/>
    </location>
    <ligand>
        <name>ATP</name>
        <dbReference type="ChEBI" id="CHEBI:30616"/>
    </ligand>
</feature>
<sequence>MRTEYCGQLRLSHVGQQVTLCGWVNRRRDLGSLIFIDMRDREGIVQVFFDPDRADALKLASELRNEFCIQVTGTVRARDAKNVNADMATGEIEVLASSLTIINRADSLPLDANHVNTEEARLKYRYLDLRRPEMAQRLKTRAKITSLVRRFMDDHGFLDIETPMLTKATPEGARDYLVPSRVHKGKFYALPQSPQLFKQLLMMSGFDRYYQIVKCFRDEDLRADRQPEFTQIDVETSFMTAPQVREVMEALVRHLWLEVKGVDLGDFPVMTFAEAERRYGSDKPDLRNPMELVDVADLLKSVEFAVFAGPANDPKGRVAALRVPGGAQLSRKQIDDYGNFVKIYGAKGLAYIKVNERAKGLDGINSPVAKFLTADIVEAILERTGAQDGDMIFFGADNKKVVADALGALRLKLGKDLSLTDEDKWAPLWVIDFPMFEDDGEGGLTAMHHPFTAPRDMTASELKTAPEEAVANAYDMVINGYEVGGGSVRIHNGEMQQTVFGILGINEQEQREKFGFLLDALKYGTPPHAGLAFGLDRLTMLLTGTDNIRDVIAFPKTTAAACLMTEAPSFANQAALTELGIPVVKKAENN</sequence>
<comment type="function">
    <text evidence="1">Catalyzes the attachment of L-aspartate to tRNA(Asp) in a two-step reaction: L-aspartate is first activated by ATP to form Asp-AMP and then transferred to the acceptor end of tRNA(Asp).</text>
</comment>
<comment type="catalytic activity">
    <reaction evidence="1">
        <text>tRNA(Asp) + L-aspartate + ATP = L-aspartyl-tRNA(Asp) + AMP + diphosphate</text>
        <dbReference type="Rhea" id="RHEA:19649"/>
        <dbReference type="Rhea" id="RHEA-COMP:9660"/>
        <dbReference type="Rhea" id="RHEA-COMP:9678"/>
        <dbReference type="ChEBI" id="CHEBI:29991"/>
        <dbReference type="ChEBI" id="CHEBI:30616"/>
        <dbReference type="ChEBI" id="CHEBI:33019"/>
        <dbReference type="ChEBI" id="CHEBI:78442"/>
        <dbReference type="ChEBI" id="CHEBI:78516"/>
        <dbReference type="ChEBI" id="CHEBI:456215"/>
        <dbReference type="EC" id="6.1.1.12"/>
    </reaction>
</comment>
<comment type="subunit">
    <text evidence="1">Homodimer.</text>
</comment>
<comment type="subcellular location">
    <subcellularLocation>
        <location evidence="1">Cytoplasm</location>
    </subcellularLocation>
</comment>
<comment type="similarity">
    <text evidence="1">Belongs to the class-II aminoacyl-tRNA synthetase family. Type 1 subfamily.</text>
</comment>
<accession>Q5PMZ6</accession>
<reference key="1">
    <citation type="journal article" date="2004" name="Nat. Genet.">
        <title>Comparison of genome degradation in Paratyphi A and Typhi, human-restricted serovars of Salmonella enterica that cause typhoid.</title>
        <authorList>
            <person name="McClelland M."/>
            <person name="Sanderson K.E."/>
            <person name="Clifton S.W."/>
            <person name="Latreille P."/>
            <person name="Porwollik S."/>
            <person name="Sabo A."/>
            <person name="Meyer R."/>
            <person name="Bieri T."/>
            <person name="Ozersky P."/>
            <person name="McLellan M."/>
            <person name="Harkins C.R."/>
            <person name="Wang C."/>
            <person name="Nguyen C."/>
            <person name="Berghoff A."/>
            <person name="Elliott G."/>
            <person name="Kohlberg S."/>
            <person name="Strong C."/>
            <person name="Du F."/>
            <person name="Carter J."/>
            <person name="Kremizki C."/>
            <person name="Layman D."/>
            <person name="Leonard S."/>
            <person name="Sun H."/>
            <person name="Fulton L."/>
            <person name="Nash W."/>
            <person name="Miner T."/>
            <person name="Minx P."/>
            <person name="Delehaunty K."/>
            <person name="Fronick C."/>
            <person name="Magrini V."/>
            <person name="Nhan M."/>
            <person name="Warren W."/>
            <person name="Florea L."/>
            <person name="Spieth J."/>
            <person name="Wilson R.K."/>
        </authorList>
    </citation>
    <scope>NUCLEOTIDE SEQUENCE [LARGE SCALE GENOMIC DNA]</scope>
    <source>
        <strain>ATCC 9150 / SARB42</strain>
    </source>
</reference>
<protein>
    <recommendedName>
        <fullName evidence="1">Aspartate--tRNA ligase</fullName>
        <ecNumber evidence="1">6.1.1.12</ecNumber>
    </recommendedName>
    <alternativeName>
        <fullName evidence="1">Aspartyl-tRNA synthetase</fullName>
        <shortName evidence="1">AspRS</shortName>
    </alternativeName>
</protein>
<gene>
    <name evidence="1" type="primary">aspS</name>
    <name type="ordered locus">SPA0968</name>
</gene>
<organism>
    <name type="scientific">Salmonella paratyphi A (strain ATCC 9150 / SARB42)</name>
    <dbReference type="NCBI Taxonomy" id="295319"/>
    <lineage>
        <taxon>Bacteria</taxon>
        <taxon>Pseudomonadati</taxon>
        <taxon>Pseudomonadota</taxon>
        <taxon>Gammaproteobacteria</taxon>
        <taxon>Enterobacterales</taxon>
        <taxon>Enterobacteriaceae</taxon>
        <taxon>Salmonella</taxon>
    </lineage>
</organism>
<dbReference type="EC" id="6.1.1.12" evidence="1"/>
<dbReference type="EMBL" id="CP000026">
    <property type="protein sequence ID" value="AAV76943.1"/>
    <property type="molecule type" value="Genomic_DNA"/>
</dbReference>
<dbReference type="RefSeq" id="WP_001258632.1">
    <property type="nucleotide sequence ID" value="NC_006511.1"/>
</dbReference>
<dbReference type="SMR" id="Q5PMZ6"/>
<dbReference type="KEGG" id="spt:SPA0968"/>
<dbReference type="HOGENOM" id="CLU_014330_3_2_6"/>
<dbReference type="Proteomes" id="UP000008185">
    <property type="component" value="Chromosome"/>
</dbReference>
<dbReference type="GO" id="GO:0005737">
    <property type="term" value="C:cytoplasm"/>
    <property type="evidence" value="ECO:0007669"/>
    <property type="project" value="UniProtKB-SubCell"/>
</dbReference>
<dbReference type="GO" id="GO:0004815">
    <property type="term" value="F:aspartate-tRNA ligase activity"/>
    <property type="evidence" value="ECO:0007669"/>
    <property type="project" value="UniProtKB-UniRule"/>
</dbReference>
<dbReference type="GO" id="GO:0005524">
    <property type="term" value="F:ATP binding"/>
    <property type="evidence" value="ECO:0007669"/>
    <property type="project" value="UniProtKB-UniRule"/>
</dbReference>
<dbReference type="GO" id="GO:0003676">
    <property type="term" value="F:nucleic acid binding"/>
    <property type="evidence" value="ECO:0007669"/>
    <property type="project" value="InterPro"/>
</dbReference>
<dbReference type="GO" id="GO:0006422">
    <property type="term" value="P:aspartyl-tRNA aminoacylation"/>
    <property type="evidence" value="ECO:0007669"/>
    <property type="project" value="UniProtKB-UniRule"/>
</dbReference>
<dbReference type="CDD" id="cd00777">
    <property type="entry name" value="AspRS_core"/>
    <property type="match status" value="1"/>
</dbReference>
<dbReference type="CDD" id="cd04317">
    <property type="entry name" value="EcAspRS_like_N"/>
    <property type="match status" value="1"/>
</dbReference>
<dbReference type="FunFam" id="2.40.50.140:FF:000080">
    <property type="entry name" value="Aspartate--tRNA ligase"/>
    <property type="match status" value="1"/>
</dbReference>
<dbReference type="FunFam" id="3.30.1360.30:FF:000001">
    <property type="entry name" value="Aspartate--tRNA ligase"/>
    <property type="match status" value="1"/>
</dbReference>
<dbReference type="Gene3D" id="3.30.930.10">
    <property type="entry name" value="Bira Bifunctional Protein, Domain 2"/>
    <property type="match status" value="1"/>
</dbReference>
<dbReference type="Gene3D" id="3.30.1360.30">
    <property type="entry name" value="GAD-like domain"/>
    <property type="match status" value="1"/>
</dbReference>
<dbReference type="Gene3D" id="2.40.50.140">
    <property type="entry name" value="Nucleic acid-binding proteins"/>
    <property type="match status" value="1"/>
</dbReference>
<dbReference type="HAMAP" id="MF_00044">
    <property type="entry name" value="Asp_tRNA_synth_type1"/>
    <property type="match status" value="1"/>
</dbReference>
<dbReference type="InterPro" id="IPR004364">
    <property type="entry name" value="Aa-tRNA-synt_II"/>
</dbReference>
<dbReference type="InterPro" id="IPR006195">
    <property type="entry name" value="aa-tRNA-synth_II"/>
</dbReference>
<dbReference type="InterPro" id="IPR045864">
    <property type="entry name" value="aa-tRNA-synth_II/BPL/LPL"/>
</dbReference>
<dbReference type="InterPro" id="IPR004524">
    <property type="entry name" value="Asp-tRNA-ligase_1"/>
</dbReference>
<dbReference type="InterPro" id="IPR047089">
    <property type="entry name" value="Asp-tRNA-ligase_1_N"/>
</dbReference>
<dbReference type="InterPro" id="IPR002312">
    <property type="entry name" value="Asp/Asn-tRNA-synth_IIb"/>
</dbReference>
<dbReference type="InterPro" id="IPR047090">
    <property type="entry name" value="AspRS_core"/>
</dbReference>
<dbReference type="InterPro" id="IPR004115">
    <property type="entry name" value="GAD-like_sf"/>
</dbReference>
<dbReference type="InterPro" id="IPR029351">
    <property type="entry name" value="GAD_dom"/>
</dbReference>
<dbReference type="InterPro" id="IPR012340">
    <property type="entry name" value="NA-bd_OB-fold"/>
</dbReference>
<dbReference type="InterPro" id="IPR004365">
    <property type="entry name" value="NA-bd_OB_tRNA"/>
</dbReference>
<dbReference type="NCBIfam" id="TIGR00459">
    <property type="entry name" value="aspS_bact"/>
    <property type="match status" value="1"/>
</dbReference>
<dbReference type="NCBIfam" id="NF001750">
    <property type="entry name" value="PRK00476.1"/>
    <property type="match status" value="1"/>
</dbReference>
<dbReference type="PANTHER" id="PTHR22594:SF5">
    <property type="entry name" value="ASPARTATE--TRNA LIGASE, MITOCHONDRIAL"/>
    <property type="match status" value="1"/>
</dbReference>
<dbReference type="PANTHER" id="PTHR22594">
    <property type="entry name" value="ASPARTYL/LYSYL-TRNA SYNTHETASE"/>
    <property type="match status" value="1"/>
</dbReference>
<dbReference type="Pfam" id="PF02938">
    <property type="entry name" value="GAD"/>
    <property type="match status" value="1"/>
</dbReference>
<dbReference type="Pfam" id="PF00152">
    <property type="entry name" value="tRNA-synt_2"/>
    <property type="match status" value="1"/>
</dbReference>
<dbReference type="Pfam" id="PF01336">
    <property type="entry name" value="tRNA_anti-codon"/>
    <property type="match status" value="1"/>
</dbReference>
<dbReference type="PRINTS" id="PR01042">
    <property type="entry name" value="TRNASYNTHASP"/>
</dbReference>
<dbReference type="SUPFAM" id="SSF55681">
    <property type="entry name" value="Class II aaRS and biotin synthetases"/>
    <property type="match status" value="1"/>
</dbReference>
<dbReference type="SUPFAM" id="SSF55261">
    <property type="entry name" value="GAD domain-like"/>
    <property type="match status" value="1"/>
</dbReference>
<dbReference type="SUPFAM" id="SSF50249">
    <property type="entry name" value="Nucleic acid-binding proteins"/>
    <property type="match status" value="1"/>
</dbReference>
<dbReference type="PROSITE" id="PS50862">
    <property type="entry name" value="AA_TRNA_LIGASE_II"/>
    <property type="match status" value="1"/>
</dbReference>
<proteinExistence type="inferred from homology"/>